<proteinExistence type="inferred from homology"/>
<sequence>MGAAGLLEIKKRIKSVENTRKITNAMGLVATSKLRKTKNELAVNNKFIDITEPVVRNLATTAGEEGSNVYFEGNDSQNKLYVVITSDSGLCGGFNSSVVSQLVSQIKDKKDTAKIVLVGSKGLGYLKRIKIEPVGEYVGIEDVPTVSEAKEIFDKALEMYLNGDVSEVNIVYSDFISSVKQETKSVKILPISKSEGTTGSFLIEPDLDIVLEDALNIYLKGKIRSILLSSKCSEQSTRMTAMDGATKNADDLLDKLKLKFNRIRQGAITQEISEIVGGAAAQN</sequence>
<gene>
    <name evidence="1" type="primary">atpG</name>
    <name type="ordered locus">Cbei_0417</name>
</gene>
<comment type="function">
    <text evidence="1">Produces ATP from ADP in the presence of a proton gradient across the membrane. The gamma chain is believed to be important in regulating ATPase activity and the flow of protons through the CF(0) complex.</text>
</comment>
<comment type="subunit">
    <text evidence="1">F-type ATPases have 2 components, CF(1) - the catalytic core - and CF(0) - the membrane proton channel. CF(1) has five subunits: alpha(3), beta(3), gamma(1), delta(1), epsilon(1). CF(0) has three main subunits: a, b and c.</text>
</comment>
<comment type="subcellular location">
    <subcellularLocation>
        <location evidence="1">Cell membrane</location>
        <topology evidence="1">Peripheral membrane protein</topology>
    </subcellularLocation>
</comment>
<comment type="similarity">
    <text evidence="1">Belongs to the ATPase gamma chain family.</text>
</comment>
<name>ATPG_CLOB8</name>
<reference key="1">
    <citation type="submission" date="2007-06" db="EMBL/GenBank/DDBJ databases">
        <title>Complete sequence of Clostridium beijerinckii NCIMB 8052.</title>
        <authorList>
            <consortium name="US DOE Joint Genome Institute"/>
            <person name="Copeland A."/>
            <person name="Lucas S."/>
            <person name="Lapidus A."/>
            <person name="Barry K."/>
            <person name="Detter J.C."/>
            <person name="Glavina del Rio T."/>
            <person name="Hammon N."/>
            <person name="Israni S."/>
            <person name="Dalin E."/>
            <person name="Tice H."/>
            <person name="Pitluck S."/>
            <person name="Sims D."/>
            <person name="Brettin T."/>
            <person name="Bruce D."/>
            <person name="Tapia R."/>
            <person name="Brainard J."/>
            <person name="Schmutz J."/>
            <person name="Larimer F."/>
            <person name="Land M."/>
            <person name="Hauser L."/>
            <person name="Kyrpides N."/>
            <person name="Mikhailova N."/>
            <person name="Bennet G."/>
            <person name="Cann I."/>
            <person name="Chen J.-S."/>
            <person name="Contreras A.L."/>
            <person name="Jones D."/>
            <person name="Kashket E."/>
            <person name="Mitchell W."/>
            <person name="Stoddard S."/>
            <person name="Schwarz W."/>
            <person name="Qureshi N."/>
            <person name="Young M."/>
            <person name="Shi Z."/>
            <person name="Ezeji T."/>
            <person name="White B."/>
            <person name="Blaschek H."/>
            <person name="Richardson P."/>
        </authorList>
    </citation>
    <scope>NUCLEOTIDE SEQUENCE [LARGE SCALE GENOMIC DNA]</scope>
    <source>
        <strain>ATCC 51743 / NCIMB 8052</strain>
    </source>
</reference>
<organism>
    <name type="scientific">Clostridium beijerinckii (strain ATCC 51743 / NCIMB 8052)</name>
    <name type="common">Clostridium acetobutylicum</name>
    <dbReference type="NCBI Taxonomy" id="290402"/>
    <lineage>
        <taxon>Bacteria</taxon>
        <taxon>Bacillati</taxon>
        <taxon>Bacillota</taxon>
        <taxon>Clostridia</taxon>
        <taxon>Eubacteriales</taxon>
        <taxon>Clostridiaceae</taxon>
        <taxon>Clostridium</taxon>
    </lineage>
</organism>
<accession>A6LQH5</accession>
<feature type="chain" id="PRO_1000083779" description="ATP synthase gamma chain">
    <location>
        <begin position="1"/>
        <end position="283"/>
    </location>
</feature>
<dbReference type="EMBL" id="CP000721">
    <property type="protein sequence ID" value="ABR32605.1"/>
    <property type="molecule type" value="Genomic_DNA"/>
</dbReference>
<dbReference type="RefSeq" id="WP_011967766.1">
    <property type="nucleotide sequence ID" value="NC_009617.1"/>
</dbReference>
<dbReference type="SMR" id="A6LQH5"/>
<dbReference type="GeneID" id="66343329"/>
<dbReference type="KEGG" id="cbe:Cbei_0417"/>
<dbReference type="eggNOG" id="COG0224">
    <property type="taxonomic scope" value="Bacteria"/>
</dbReference>
<dbReference type="HOGENOM" id="CLU_050669_0_1_9"/>
<dbReference type="Proteomes" id="UP000000565">
    <property type="component" value="Chromosome"/>
</dbReference>
<dbReference type="GO" id="GO:0005886">
    <property type="term" value="C:plasma membrane"/>
    <property type="evidence" value="ECO:0007669"/>
    <property type="project" value="UniProtKB-SubCell"/>
</dbReference>
<dbReference type="GO" id="GO:0045259">
    <property type="term" value="C:proton-transporting ATP synthase complex"/>
    <property type="evidence" value="ECO:0007669"/>
    <property type="project" value="UniProtKB-KW"/>
</dbReference>
<dbReference type="GO" id="GO:0005524">
    <property type="term" value="F:ATP binding"/>
    <property type="evidence" value="ECO:0007669"/>
    <property type="project" value="UniProtKB-UniRule"/>
</dbReference>
<dbReference type="GO" id="GO:0046933">
    <property type="term" value="F:proton-transporting ATP synthase activity, rotational mechanism"/>
    <property type="evidence" value="ECO:0007669"/>
    <property type="project" value="UniProtKB-UniRule"/>
</dbReference>
<dbReference type="GO" id="GO:0042777">
    <property type="term" value="P:proton motive force-driven plasma membrane ATP synthesis"/>
    <property type="evidence" value="ECO:0007669"/>
    <property type="project" value="UniProtKB-UniRule"/>
</dbReference>
<dbReference type="CDD" id="cd12151">
    <property type="entry name" value="F1-ATPase_gamma"/>
    <property type="match status" value="1"/>
</dbReference>
<dbReference type="Gene3D" id="3.40.1380.10">
    <property type="match status" value="1"/>
</dbReference>
<dbReference type="Gene3D" id="1.10.287.80">
    <property type="entry name" value="ATP synthase, gamma subunit, helix hairpin domain"/>
    <property type="match status" value="1"/>
</dbReference>
<dbReference type="HAMAP" id="MF_00815">
    <property type="entry name" value="ATP_synth_gamma_bact"/>
    <property type="match status" value="1"/>
</dbReference>
<dbReference type="InterPro" id="IPR035968">
    <property type="entry name" value="ATP_synth_F1_ATPase_gsu"/>
</dbReference>
<dbReference type="InterPro" id="IPR000131">
    <property type="entry name" value="ATP_synth_F1_gsu"/>
</dbReference>
<dbReference type="InterPro" id="IPR023632">
    <property type="entry name" value="ATP_synth_F1_gsu_CS"/>
</dbReference>
<dbReference type="NCBIfam" id="TIGR01146">
    <property type="entry name" value="ATPsyn_F1gamma"/>
    <property type="match status" value="1"/>
</dbReference>
<dbReference type="PANTHER" id="PTHR11693">
    <property type="entry name" value="ATP SYNTHASE GAMMA CHAIN"/>
    <property type="match status" value="1"/>
</dbReference>
<dbReference type="PANTHER" id="PTHR11693:SF22">
    <property type="entry name" value="ATP SYNTHASE SUBUNIT GAMMA, MITOCHONDRIAL"/>
    <property type="match status" value="1"/>
</dbReference>
<dbReference type="Pfam" id="PF00231">
    <property type="entry name" value="ATP-synt"/>
    <property type="match status" value="1"/>
</dbReference>
<dbReference type="PRINTS" id="PR00126">
    <property type="entry name" value="ATPASEGAMMA"/>
</dbReference>
<dbReference type="SUPFAM" id="SSF52943">
    <property type="entry name" value="ATP synthase (F1-ATPase), gamma subunit"/>
    <property type="match status" value="1"/>
</dbReference>
<dbReference type="PROSITE" id="PS00153">
    <property type="entry name" value="ATPASE_GAMMA"/>
    <property type="match status" value="1"/>
</dbReference>
<keyword id="KW-0066">ATP synthesis</keyword>
<keyword id="KW-1003">Cell membrane</keyword>
<keyword id="KW-0139">CF(1)</keyword>
<keyword id="KW-0375">Hydrogen ion transport</keyword>
<keyword id="KW-0406">Ion transport</keyword>
<keyword id="KW-0472">Membrane</keyword>
<keyword id="KW-0813">Transport</keyword>
<evidence type="ECO:0000255" key="1">
    <source>
        <dbReference type="HAMAP-Rule" id="MF_00815"/>
    </source>
</evidence>
<protein>
    <recommendedName>
        <fullName evidence="1">ATP synthase gamma chain</fullName>
    </recommendedName>
    <alternativeName>
        <fullName evidence="1">ATP synthase F1 sector gamma subunit</fullName>
    </alternativeName>
    <alternativeName>
        <fullName evidence="1">F-ATPase gamma subunit</fullName>
    </alternativeName>
</protein>